<feature type="chain" id="PRO_0000272391" description="Large ribosomal subunit protein uL1">
    <location>
        <begin position="1"/>
        <end position="239"/>
    </location>
</feature>
<organism>
    <name type="scientific">Rickettsia bellii (strain RML369-C)</name>
    <dbReference type="NCBI Taxonomy" id="336407"/>
    <lineage>
        <taxon>Bacteria</taxon>
        <taxon>Pseudomonadati</taxon>
        <taxon>Pseudomonadota</taxon>
        <taxon>Alphaproteobacteria</taxon>
        <taxon>Rickettsiales</taxon>
        <taxon>Rickettsiaceae</taxon>
        <taxon>Rickettsieae</taxon>
        <taxon>Rickettsia</taxon>
        <taxon>belli group</taxon>
    </lineage>
</organism>
<dbReference type="EMBL" id="CP000087">
    <property type="protein sequence ID" value="ABE05237.1"/>
    <property type="molecule type" value="Genomic_DNA"/>
</dbReference>
<dbReference type="RefSeq" id="WP_011477815.1">
    <property type="nucleotide sequence ID" value="NC_007940.1"/>
</dbReference>
<dbReference type="SMR" id="Q1RHC7"/>
<dbReference type="KEGG" id="rbe:RBE_1156"/>
<dbReference type="eggNOG" id="COG0081">
    <property type="taxonomic scope" value="Bacteria"/>
</dbReference>
<dbReference type="HOGENOM" id="CLU_062853_0_0_5"/>
<dbReference type="OrthoDB" id="9803740at2"/>
<dbReference type="Proteomes" id="UP000001951">
    <property type="component" value="Chromosome"/>
</dbReference>
<dbReference type="GO" id="GO:0015934">
    <property type="term" value="C:large ribosomal subunit"/>
    <property type="evidence" value="ECO:0007669"/>
    <property type="project" value="InterPro"/>
</dbReference>
<dbReference type="GO" id="GO:0019843">
    <property type="term" value="F:rRNA binding"/>
    <property type="evidence" value="ECO:0007669"/>
    <property type="project" value="UniProtKB-UniRule"/>
</dbReference>
<dbReference type="GO" id="GO:0003735">
    <property type="term" value="F:structural constituent of ribosome"/>
    <property type="evidence" value="ECO:0007669"/>
    <property type="project" value="InterPro"/>
</dbReference>
<dbReference type="GO" id="GO:0000049">
    <property type="term" value="F:tRNA binding"/>
    <property type="evidence" value="ECO:0007669"/>
    <property type="project" value="UniProtKB-KW"/>
</dbReference>
<dbReference type="GO" id="GO:0006417">
    <property type="term" value="P:regulation of translation"/>
    <property type="evidence" value="ECO:0007669"/>
    <property type="project" value="UniProtKB-KW"/>
</dbReference>
<dbReference type="GO" id="GO:0006412">
    <property type="term" value="P:translation"/>
    <property type="evidence" value="ECO:0007669"/>
    <property type="project" value="UniProtKB-UniRule"/>
</dbReference>
<dbReference type="CDD" id="cd00403">
    <property type="entry name" value="Ribosomal_L1"/>
    <property type="match status" value="1"/>
</dbReference>
<dbReference type="FunFam" id="3.40.50.790:FF:000001">
    <property type="entry name" value="50S ribosomal protein L1"/>
    <property type="match status" value="1"/>
</dbReference>
<dbReference type="Gene3D" id="3.30.190.20">
    <property type="match status" value="1"/>
</dbReference>
<dbReference type="Gene3D" id="3.40.50.790">
    <property type="match status" value="1"/>
</dbReference>
<dbReference type="HAMAP" id="MF_01318_B">
    <property type="entry name" value="Ribosomal_uL1_B"/>
    <property type="match status" value="1"/>
</dbReference>
<dbReference type="InterPro" id="IPR005878">
    <property type="entry name" value="Ribosom_uL1_bac-type"/>
</dbReference>
<dbReference type="InterPro" id="IPR002143">
    <property type="entry name" value="Ribosomal_uL1"/>
</dbReference>
<dbReference type="InterPro" id="IPR023674">
    <property type="entry name" value="Ribosomal_uL1-like"/>
</dbReference>
<dbReference type="InterPro" id="IPR028364">
    <property type="entry name" value="Ribosomal_uL1/biogenesis"/>
</dbReference>
<dbReference type="InterPro" id="IPR016095">
    <property type="entry name" value="Ribosomal_uL1_3-a/b-sand"/>
</dbReference>
<dbReference type="InterPro" id="IPR023673">
    <property type="entry name" value="Ribosomal_uL1_CS"/>
</dbReference>
<dbReference type="NCBIfam" id="TIGR01169">
    <property type="entry name" value="rplA_bact"/>
    <property type="match status" value="1"/>
</dbReference>
<dbReference type="PANTHER" id="PTHR36427">
    <property type="entry name" value="54S RIBOSOMAL PROTEIN L1, MITOCHONDRIAL"/>
    <property type="match status" value="1"/>
</dbReference>
<dbReference type="PANTHER" id="PTHR36427:SF3">
    <property type="entry name" value="LARGE RIBOSOMAL SUBUNIT PROTEIN UL1M"/>
    <property type="match status" value="1"/>
</dbReference>
<dbReference type="Pfam" id="PF00687">
    <property type="entry name" value="Ribosomal_L1"/>
    <property type="match status" value="1"/>
</dbReference>
<dbReference type="PIRSF" id="PIRSF002155">
    <property type="entry name" value="Ribosomal_L1"/>
    <property type="match status" value="1"/>
</dbReference>
<dbReference type="SUPFAM" id="SSF56808">
    <property type="entry name" value="Ribosomal protein L1"/>
    <property type="match status" value="1"/>
</dbReference>
<dbReference type="PROSITE" id="PS01199">
    <property type="entry name" value="RIBOSOMAL_L1"/>
    <property type="match status" value="1"/>
</dbReference>
<sequence>MSNNKDVAIKSSGGKKIREARIKVRSDSLYNLTTAVEKLKSASYVKFDPTLEIVMKLGIDPRHSDQMVRGVVNLPAGTGKTVRVAVICKEEREEEAKVAGADLVGSTNIIDEIKAGKINFDVCIATPDMMAVIGSVARILGPKGLMPNPKLGTVTLDIKGAVKNAKSGQVEYRAEKAGIIHAGLGKLSFPDQDLLKNLKAFIDAVVKAKPTGVKGSYLKAIYLSSTMGASVQIDLASIA</sequence>
<reference key="1">
    <citation type="journal article" date="2006" name="PLoS Genet.">
        <title>Genome sequence of Rickettsia bellii illuminates the role of amoebae in gene exchanges between intracellular pathogens.</title>
        <authorList>
            <person name="Ogata H."/>
            <person name="La Scola B."/>
            <person name="Audic S."/>
            <person name="Renesto P."/>
            <person name="Blanc G."/>
            <person name="Robert C."/>
            <person name="Fournier P.-E."/>
            <person name="Claverie J.-M."/>
            <person name="Raoult D."/>
        </authorList>
    </citation>
    <scope>NUCLEOTIDE SEQUENCE [LARGE SCALE GENOMIC DNA]</scope>
    <source>
        <strain>RML369-C</strain>
    </source>
</reference>
<gene>
    <name evidence="1" type="primary">rplA</name>
    <name type="ordered locus">RBE_1156</name>
</gene>
<evidence type="ECO:0000255" key="1">
    <source>
        <dbReference type="HAMAP-Rule" id="MF_01318"/>
    </source>
</evidence>
<evidence type="ECO:0000305" key="2"/>
<proteinExistence type="inferred from homology"/>
<protein>
    <recommendedName>
        <fullName evidence="1">Large ribosomal subunit protein uL1</fullName>
    </recommendedName>
    <alternativeName>
        <fullName evidence="2">50S ribosomal protein L1</fullName>
    </alternativeName>
</protein>
<name>RL1_RICBR</name>
<comment type="function">
    <text evidence="1">Binds directly to 23S rRNA. The L1 stalk is quite mobile in the ribosome, and is involved in E site tRNA release.</text>
</comment>
<comment type="function">
    <text evidence="1">Protein L1 is also a translational repressor protein, it controls the translation of the L11 operon by binding to its mRNA.</text>
</comment>
<comment type="subunit">
    <text evidence="1">Part of the 50S ribosomal subunit.</text>
</comment>
<comment type="similarity">
    <text evidence="1">Belongs to the universal ribosomal protein uL1 family.</text>
</comment>
<keyword id="KW-0678">Repressor</keyword>
<keyword id="KW-0687">Ribonucleoprotein</keyword>
<keyword id="KW-0689">Ribosomal protein</keyword>
<keyword id="KW-0694">RNA-binding</keyword>
<keyword id="KW-0699">rRNA-binding</keyword>
<keyword id="KW-0810">Translation regulation</keyword>
<keyword id="KW-0820">tRNA-binding</keyword>
<accession>Q1RHC7</accession>